<comment type="function">
    <text evidence="1">Catalyzes 2 different reactions between oxygen and the acireductone 1,2-dihydroxy-3-keto-5-methylthiopentene (DHK-MTPene) depending upon the metal bound in the active site. Fe-containing acireductone dioxygenase (Fe-ARD) produces formate and 2-keto-4-methylthiobutyrate (KMTB), the alpha-ketoacid precursor of methionine in the methionine recycle pathway. Ni-containing acireductone dioxygenase (Ni-ARD) produces methylthiopropionate, carbon monoxide and formate, and does not lie on the methionine recycle pathway.</text>
</comment>
<comment type="catalytic activity">
    <reaction evidence="1">
        <text>1,2-dihydroxy-5-(methylsulfanyl)pent-1-en-3-one + O2 = 3-(methylsulfanyl)propanoate + CO + formate + 2 H(+)</text>
        <dbReference type="Rhea" id="RHEA:14161"/>
        <dbReference type="ChEBI" id="CHEBI:15378"/>
        <dbReference type="ChEBI" id="CHEBI:15379"/>
        <dbReference type="ChEBI" id="CHEBI:15740"/>
        <dbReference type="ChEBI" id="CHEBI:17245"/>
        <dbReference type="ChEBI" id="CHEBI:49016"/>
        <dbReference type="ChEBI" id="CHEBI:49252"/>
        <dbReference type="EC" id="1.13.11.53"/>
    </reaction>
</comment>
<comment type="catalytic activity">
    <reaction evidence="1">
        <text>1,2-dihydroxy-5-(methylsulfanyl)pent-1-en-3-one + O2 = 4-methylsulfanyl-2-oxobutanoate + formate + 2 H(+)</text>
        <dbReference type="Rhea" id="RHEA:24504"/>
        <dbReference type="ChEBI" id="CHEBI:15378"/>
        <dbReference type="ChEBI" id="CHEBI:15379"/>
        <dbReference type="ChEBI" id="CHEBI:15740"/>
        <dbReference type="ChEBI" id="CHEBI:16723"/>
        <dbReference type="ChEBI" id="CHEBI:49252"/>
        <dbReference type="EC" id="1.13.11.54"/>
    </reaction>
</comment>
<comment type="cofactor">
    <cofactor evidence="1">
        <name>Fe(2+)</name>
        <dbReference type="ChEBI" id="CHEBI:29033"/>
    </cofactor>
    <text evidence="1">Binds 1 Fe(2+) cation per monomer.</text>
</comment>
<comment type="cofactor">
    <cofactor evidence="1">
        <name>Ni(2+)</name>
        <dbReference type="ChEBI" id="CHEBI:49786"/>
    </cofactor>
    <text evidence="1">Binds 1 nickel ion per monomer.</text>
</comment>
<comment type="pathway">
    <text evidence="1">Amino-acid biosynthesis; L-methionine biosynthesis via salvage pathway; L-methionine from S-methyl-5-thio-alpha-D-ribose 1-phosphate: step 5/6.</text>
</comment>
<comment type="subunit">
    <text evidence="1">Monomer.</text>
</comment>
<comment type="similarity">
    <text evidence="1">Belongs to the acireductone dioxygenase (ARD) family.</text>
</comment>
<sequence length="170" mass="19549">MAQIRIHEVNTRIENEVEVSKFLQEEGVLYEKWNISKLPPHLNENYSLTDENKAEILAVFSKEIADVSARRGYKAHDVISLSNSTPNLDELLINFQKEHHHTDDEVRFIVSGHGIFAIEGKDGTFFDVELEPGDLISVPENARHYFTLQDDRQVVAIRIFVTTEGWVPIY</sequence>
<name>MTND_BACCZ</name>
<gene>
    <name evidence="1" type="primary">mtnD</name>
    <name type="ordered locus">BCE33L3796</name>
</gene>
<feature type="chain" id="PRO_0000359175" description="Acireductone dioxygenase">
    <location>
        <begin position="1"/>
        <end position="170"/>
    </location>
</feature>
<feature type="binding site" evidence="1">
    <location>
        <position position="99"/>
    </location>
    <ligand>
        <name>Fe(2+)</name>
        <dbReference type="ChEBI" id="CHEBI:29033"/>
    </ligand>
</feature>
<feature type="binding site" evidence="1">
    <location>
        <position position="99"/>
    </location>
    <ligand>
        <name>Ni(2+)</name>
        <dbReference type="ChEBI" id="CHEBI:49786"/>
    </ligand>
</feature>
<feature type="binding site" evidence="1">
    <location>
        <position position="101"/>
    </location>
    <ligand>
        <name>Fe(2+)</name>
        <dbReference type="ChEBI" id="CHEBI:29033"/>
    </ligand>
</feature>
<feature type="binding site" evidence="1">
    <location>
        <position position="101"/>
    </location>
    <ligand>
        <name>Ni(2+)</name>
        <dbReference type="ChEBI" id="CHEBI:49786"/>
    </ligand>
</feature>
<feature type="binding site" evidence="1">
    <location>
        <position position="105"/>
    </location>
    <ligand>
        <name>Fe(2+)</name>
        <dbReference type="ChEBI" id="CHEBI:29033"/>
    </ligand>
</feature>
<feature type="binding site" evidence="1">
    <location>
        <position position="105"/>
    </location>
    <ligand>
        <name>Ni(2+)</name>
        <dbReference type="ChEBI" id="CHEBI:49786"/>
    </ligand>
</feature>
<feature type="binding site" evidence="1">
    <location>
        <position position="144"/>
    </location>
    <ligand>
        <name>Fe(2+)</name>
        <dbReference type="ChEBI" id="CHEBI:29033"/>
    </ligand>
</feature>
<feature type="binding site" evidence="1">
    <location>
        <position position="144"/>
    </location>
    <ligand>
        <name>Ni(2+)</name>
        <dbReference type="ChEBI" id="CHEBI:49786"/>
    </ligand>
</feature>
<feature type="site" description="May play a role in metal incorporation in vivo" evidence="1">
    <location>
        <position position="98"/>
    </location>
</feature>
<feature type="site" description="May play a role in transmitting local conformational changes" evidence="1">
    <location>
        <position position="104"/>
    </location>
</feature>
<feature type="site" description="Important to generate the dianion" evidence="1">
    <location>
        <position position="107"/>
    </location>
</feature>
<reference key="1">
    <citation type="journal article" date="2006" name="J. Bacteriol.">
        <title>Pathogenomic sequence analysis of Bacillus cereus and Bacillus thuringiensis isolates closely related to Bacillus anthracis.</title>
        <authorList>
            <person name="Han C.S."/>
            <person name="Xie G."/>
            <person name="Challacombe J.F."/>
            <person name="Altherr M.R."/>
            <person name="Bhotika S.S."/>
            <person name="Bruce D."/>
            <person name="Campbell C.S."/>
            <person name="Campbell M.L."/>
            <person name="Chen J."/>
            <person name="Chertkov O."/>
            <person name="Cleland C."/>
            <person name="Dimitrijevic M."/>
            <person name="Doggett N.A."/>
            <person name="Fawcett J.J."/>
            <person name="Glavina T."/>
            <person name="Goodwin L.A."/>
            <person name="Hill K.K."/>
            <person name="Hitchcock P."/>
            <person name="Jackson P.J."/>
            <person name="Keim P."/>
            <person name="Kewalramani A.R."/>
            <person name="Longmire J."/>
            <person name="Lucas S."/>
            <person name="Malfatti S."/>
            <person name="McMurry K."/>
            <person name="Meincke L.J."/>
            <person name="Misra M."/>
            <person name="Moseman B.L."/>
            <person name="Mundt M."/>
            <person name="Munk A.C."/>
            <person name="Okinaka R.T."/>
            <person name="Parson-Quintana B."/>
            <person name="Reilly L.P."/>
            <person name="Richardson P."/>
            <person name="Robinson D.L."/>
            <person name="Rubin E."/>
            <person name="Saunders E."/>
            <person name="Tapia R."/>
            <person name="Tesmer J.G."/>
            <person name="Thayer N."/>
            <person name="Thompson L.S."/>
            <person name="Tice H."/>
            <person name="Ticknor L.O."/>
            <person name="Wills P.L."/>
            <person name="Brettin T.S."/>
            <person name="Gilna P."/>
        </authorList>
    </citation>
    <scope>NUCLEOTIDE SEQUENCE [LARGE SCALE GENOMIC DNA]</scope>
    <source>
        <strain>ZK / E33L</strain>
    </source>
</reference>
<proteinExistence type="inferred from homology"/>
<accession>Q635P0</accession>
<keyword id="KW-0028">Amino-acid biosynthesis</keyword>
<keyword id="KW-0223">Dioxygenase</keyword>
<keyword id="KW-0408">Iron</keyword>
<keyword id="KW-0479">Metal-binding</keyword>
<keyword id="KW-0486">Methionine biosynthesis</keyword>
<keyword id="KW-0533">Nickel</keyword>
<keyword id="KW-0560">Oxidoreductase</keyword>
<protein>
    <recommendedName>
        <fullName evidence="1">Acireductone dioxygenase</fullName>
    </recommendedName>
    <alternativeName>
        <fullName evidence="1">1,2-dihydroxy-3-keto-5-methylthiopentene dioxygenase</fullName>
        <shortName evidence="1">DHK-MTPene dioxygenase</shortName>
    </alternativeName>
    <alternativeName>
        <fullName evidence="1">Acireductone dioxygenase (Fe(2+)-requiring)</fullName>
        <shortName evidence="1">ARD'</shortName>
        <shortName evidence="1">Fe-ARD</shortName>
        <ecNumber evidence="1">1.13.11.54</ecNumber>
    </alternativeName>
    <alternativeName>
        <fullName evidence="1">Acireductone dioxygenase (Ni(2+)-requiring)</fullName>
        <shortName evidence="1">ARD</shortName>
        <shortName evidence="1">Ni-ARD</shortName>
        <ecNumber evidence="1">1.13.11.53</ecNumber>
    </alternativeName>
</protein>
<organism>
    <name type="scientific">Bacillus cereus (strain ZK / E33L)</name>
    <dbReference type="NCBI Taxonomy" id="288681"/>
    <lineage>
        <taxon>Bacteria</taxon>
        <taxon>Bacillati</taxon>
        <taxon>Bacillota</taxon>
        <taxon>Bacilli</taxon>
        <taxon>Bacillales</taxon>
        <taxon>Bacillaceae</taxon>
        <taxon>Bacillus</taxon>
        <taxon>Bacillus cereus group</taxon>
    </lineage>
</organism>
<dbReference type="EC" id="1.13.11.54" evidence="1"/>
<dbReference type="EC" id="1.13.11.53" evidence="1"/>
<dbReference type="EMBL" id="CP000001">
    <property type="protein sequence ID" value="AAU16471.1"/>
    <property type="molecule type" value="Genomic_DNA"/>
</dbReference>
<dbReference type="RefSeq" id="WP_000057309.1">
    <property type="nucleotide sequence ID" value="NZ_CP009968.1"/>
</dbReference>
<dbReference type="SMR" id="Q635P0"/>
<dbReference type="KEGG" id="bcz:BCE33L3796"/>
<dbReference type="PATRIC" id="fig|288681.22.peg.1607"/>
<dbReference type="UniPathway" id="UPA00904">
    <property type="reaction ID" value="UER00878"/>
</dbReference>
<dbReference type="Proteomes" id="UP000002612">
    <property type="component" value="Chromosome"/>
</dbReference>
<dbReference type="GO" id="GO:0010308">
    <property type="term" value="F:acireductone dioxygenase (Ni2+-requiring) activity"/>
    <property type="evidence" value="ECO:0007669"/>
    <property type="project" value="UniProtKB-UniRule"/>
</dbReference>
<dbReference type="GO" id="GO:0010309">
    <property type="term" value="F:acireductone dioxygenase [iron(II)-requiring] activity"/>
    <property type="evidence" value="ECO:0007669"/>
    <property type="project" value="UniProtKB-UniRule"/>
</dbReference>
<dbReference type="GO" id="GO:0005506">
    <property type="term" value="F:iron ion binding"/>
    <property type="evidence" value="ECO:0007669"/>
    <property type="project" value="UniProtKB-UniRule"/>
</dbReference>
<dbReference type="GO" id="GO:0016151">
    <property type="term" value="F:nickel cation binding"/>
    <property type="evidence" value="ECO:0007669"/>
    <property type="project" value="UniProtKB-UniRule"/>
</dbReference>
<dbReference type="GO" id="GO:0019509">
    <property type="term" value="P:L-methionine salvage from methylthioadenosine"/>
    <property type="evidence" value="ECO:0007669"/>
    <property type="project" value="UniProtKB-UniRule"/>
</dbReference>
<dbReference type="GO" id="GO:0019284">
    <property type="term" value="P:L-methionine salvage from S-adenosylmethionine"/>
    <property type="evidence" value="ECO:0007669"/>
    <property type="project" value="InterPro"/>
</dbReference>
<dbReference type="CDD" id="cd02232">
    <property type="entry name" value="cupin_ARD"/>
    <property type="match status" value="1"/>
</dbReference>
<dbReference type="FunFam" id="2.60.120.10:FF:000056">
    <property type="entry name" value="Acireductone dioxygenase"/>
    <property type="match status" value="1"/>
</dbReference>
<dbReference type="Gene3D" id="2.60.120.10">
    <property type="entry name" value="Jelly Rolls"/>
    <property type="match status" value="1"/>
</dbReference>
<dbReference type="HAMAP" id="MF_01682">
    <property type="entry name" value="Salvage_MtnD"/>
    <property type="match status" value="1"/>
</dbReference>
<dbReference type="InterPro" id="IPR004313">
    <property type="entry name" value="ARD"/>
</dbReference>
<dbReference type="InterPro" id="IPR023956">
    <property type="entry name" value="ARD_bac"/>
</dbReference>
<dbReference type="InterPro" id="IPR014710">
    <property type="entry name" value="RmlC-like_jellyroll"/>
</dbReference>
<dbReference type="InterPro" id="IPR011051">
    <property type="entry name" value="RmlC_Cupin_sf"/>
</dbReference>
<dbReference type="PANTHER" id="PTHR23418">
    <property type="entry name" value="ACIREDUCTONE DIOXYGENASE"/>
    <property type="match status" value="1"/>
</dbReference>
<dbReference type="PANTHER" id="PTHR23418:SF0">
    <property type="entry name" value="ACIREDUCTONE DIOXYGENASE"/>
    <property type="match status" value="1"/>
</dbReference>
<dbReference type="Pfam" id="PF03079">
    <property type="entry name" value="ARD"/>
    <property type="match status" value="1"/>
</dbReference>
<dbReference type="SUPFAM" id="SSF51182">
    <property type="entry name" value="RmlC-like cupins"/>
    <property type="match status" value="1"/>
</dbReference>
<evidence type="ECO:0000255" key="1">
    <source>
        <dbReference type="HAMAP-Rule" id="MF_01682"/>
    </source>
</evidence>